<reference key="1">
    <citation type="journal article" date="2004" name="Proc. Natl. Acad. Sci. U.S.A.">
        <title>The diploid genome sequence of Candida albicans.</title>
        <authorList>
            <person name="Jones T."/>
            <person name="Federspiel N.A."/>
            <person name="Chibana H."/>
            <person name="Dungan J."/>
            <person name="Kalman S."/>
            <person name="Magee B.B."/>
            <person name="Newport G."/>
            <person name="Thorstenson Y.R."/>
            <person name="Agabian N."/>
            <person name="Magee P.T."/>
            <person name="Davis R.W."/>
            <person name="Scherer S."/>
        </authorList>
    </citation>
    <scope>NUCLEOTIDE SEQUENCE [LARGE SCALE GENOMIC DNA]</scope>
    <source>
        <strain>SC5314 / ATCC MYA-2876</strain>
    </source>
</reference>
<reference key="2">
    <citation type="journal article" date="2007" name="Genome Biol.">
        <title>Assembly of the Candida albicans genome into sixteen supercontigs aligned on the eight chromosomes.</title>
        <authorList>
            <person name="van het Hoog M."/>
            <person name="Rast T.J."/>
            <person name="Martchenko M."/>
            <person name="Grindle S."/>
            <person name="Dignard D."/>
            <person name="Hogues H."/>
            <person name="Cuomo C."/>
            <person name="Berriman M."/>
            <person name="Scherer S."/>
            <person name="Magee B.B."/>
            <person name="Whiteway M."/>
            <person name="Chibana H."/>
            <person name="Nantel A."/>
            <person name="Magee P.T."/>
        </authorList>
    </citation>
    <scope>GENOME REANNOTATION</scope>
    <source>
        <strain>SC5314 / ATCC MYA-2876</strain>
    </source>
</reference>
<reference key="3">
    <citation type="journal article" date="2013" name="Genome Biol.">
        <title>Assembly of a phased diploid Candida albicans genome facilitates allele-specific measurements and provides a simple model for repeat and indel structure.</title>
        <authorList>
            <person name="Muzzey D."/>
            <person name="Schwartz K."/>
            <person name="Weissman J.S."/>
            <person name="Sherlock G."/>
        </authorList>
    </citation>
    <scope>NUCLEOTIDE SEQUENCE [LARGE SCALE GENOMIC DNA]</scope>
    <scope>GENOME REANNOTATION</scope>
    <source>
        <strain>SC5314 / ATCC MYA-2876</strain>
    </source>
</reference>
<reference key="4">
    <citation type="journal article" date="2001" name="J. Biol. Chem.">
        <title>DNA array studies demonstrate convergent regulation of virulence factors by Cph1, Cph2, and Efg1 in Candida albicans.</title>
        <authorList>
            <person name="Lane S."/>
            <person name="Birse C."/>
            <person name="Zhou S."/>
            <person name="Matson R."/>
            <person name="Liu H."/>
        </authorList>
    </citation>
    <scope>INDUCTION</scope>
</reference>
<reference key="5">
    <citation type="journal article" date="2004" name="Antimicrob. Agents Chemother.">
        <title>Comparison of gene expression profiles of Candida albicans azole-resistant clinical isolates and laboratory strains exposed to drugs inducing multidrug transporters.</title>
        <authorList>
            <person name="Karababa M."/>
            <person name="Coste A.T."/>
            <person name="Rognon B."/>
            <person name="Bille J."/>
            <person name="Sanglard D."/>
        </authorList>
    </citation>
    <scope>INDUCTION</scope>
</reference>
<reference key="6">
    <citation type="journal article" date="2004" name="Eukaryot. Cell">
        <title>Functional characterization of myosin I tail regions in Candida albicans.</title>
        <authorList>
            <person name="Oberholzer U."/>
            <person name="Iouk T.L."/>
            <person name="Thomas D.Y."/>
            <person name="Whiteway M."/>
        </authorList>
    </citation>
    <scope>INDUCTION</scope>
</reference>
<reference key="7">
    <citation type="journal article" date="2004" name="Mol. Microbiol.">
        <title>Transcriptional profiling in Candida albicans reveals new adaptive responses to extracellular pH and functions for Rim101p.</title>
        <authorList>
            <person name="Bensen E.S."/>
            <person name="Martin S.J."/>
            <person name="Li M."/>
            <person name="Berman J."/>
            <person name="Davis D.A."/>
        </authorList>
    </citation>
    <scope>INDUCTION</scope>
</reference>
<reference key="8">
    <citation type="journal article" date="2006" name="Mol. Biol. Cell">
        <title>Role of the Hog1 stress-activated protein kinase in the global transcriptional response to stress in the fungal pathogen Candida albicans.</title>
        <authorList>
            <person name="Enjalbert B."/>
            <person name="Smith D.A."/>
            <person name="Cornell M.J."/>
            <person name="Alam I."/>
            <person name="Nicholls S."/>
            <person name="Brown A.J.P."/>
            <person name="Quinn J."/>
        </authorList>
    </citation>
    <scope>INDUCTION</scope>
</reference>
<reference key="9">
    <citation type="journal article" date="2008" name="Med. Sci. Monit.">
        <title>The Candida albicans Ddr48 protein is essential for filamentation, stress response, and confers partial antifungal drug resistance.</title>
        <authorList>
            <person name="Dib L."/>
            <person name="Hayek P."/>
            <person name="Sadek H."/>
            <person name="Beyrouthy B."/>
            <person name="Khalaf R.A."/>
        </authorList>
    </citation>
    <scope>FUNCTION</scope>
</reference>
<reference key="10">
    <citation type="journal article" date="2009" name="Antimicrob. Agents Chemother.">
        <title>Farnesol-induced apoptosis in Candida albicans.</title>
        <authorList>
            <person name="Shirtliff M.E."/>
            <person name="Krom B.P."/>
            <person name="Meijering R.A."/>
            <person name="Peters B.M."/>
            <person name="Zhu J."/>
            <person name="Scheper M.A."/>
            <person name="Harris M.L."/>
            <person name="Jabra-Rizk M.A."/>
        </authorList>
    </citation>
    <scope>INDUCTION</scope>
</reference>
<reference key="11">
    <citation type="journal article" date="2009" name="Eukaryot. Cell">
        <title>Candida albicans RFX2 encodes a DNA binding protein involved in DNA damage responses, morphogenesis, and virulence.</title>
        <authorList>
            <person name="Hao B."/>
            <person name="Clancy C.J."/>
            <person name="Cheng S."/>
            <person name="Raman S.B."/>
            <person name="Iczkowski K.A."/>
            <person name="Nguyen M.H."/>
        </authorList>
    </citation>
    <scope>INDUCTION</scope>
</reference>
<reference key="12">
    <citation type="journal article" date="2010" name="Eukaryot. Cell">
        <title>Regulation of the hypoxic response in Candida albicans.</title>
        <authorList>
            <person name="Synnott J.M."/>
            <person name="Guida A."/>
            <person name="Mulhern-Haughey S."/>
            <person name="Higgins D.G."/>
            <person name="Butler G."/>
        </authorList>
    </citation>
    <scope>INDUCTION</scope>
</reference>
<reference key="13">
    <citation type="journal article" date="2010" name="Fungal Genet. Biol.">
        <title>The Sko1 protein represses the yeast-to-hypha transition and regulates the oxidative stress response in Candida albicans.</title>
        <authorList>
            <person name="Alonso-Monge R."/>
            <person name="Roman E."/>
            <person name="Arana D.M."/>
            <person name="Prieto D."/>
            <person name="Urrialde V."/>
            <person name="Nombela C."/>
            <person name="Pla J."/>
        </authorList>
    </citation>
    <scope>INDUCTION</scope>
</reference>
<reference key="14">
    <citation type="journal article" date="2010" name="J. Proteomics">
        <title>Identification of Candida albicans exposed surface proteins in vivo by a rapid proteomic approach.</title>
        <authorList>
            <person name="Hernaez M.L."/>
            <person name="Ximenez-Embun P."/>
            <person name="Martinez-Gomariz M."/>
            <person name="Gutierrez-Blazquez M.D."/>
            <person name="Nombela C."/>
            <person name="Gil C."/>
        </authorList>
    </citation>
    <scope>IDENTIFICATION BY MASS SPECTROMETRY</scope>
    <scope>SUBCELLULAR LOCATION</scope>
</reference>
<reference key="15">
    <citation type="journal article" date="2012" name="Eukaryot. Cell">
        <title>Investigating the function of Ddr48p in Candida albicans.</title>
        <authorList>
            <person name="Cleary I.A."/>
            <person name="MacGregor N.B."/>
            <person name="Saville S.P."/>
            <person name="Thomas D.P."/>
        </authorList>
    </citation>
    <scope>FUNCTION</scope>
    <scope>DISRUPTION PHENOTYPE</scope>
</reference>
<feature type="chain" id="PRO_0000426732" description="Stress protein DDR48">
    <location>
        <begin position="1"/>
        <end position="212"/>
    </location>
</feature>
<feature type="repeat" description="1; approximate">
    <location>
        <begin position="20"/>
        <end position="27"/>
    </location>
</feature>
<feature type="repeat" description="2; approximate">
    <location>
        <begin position="32"/>
        <end position="39"/>
    </location>
</feature>
<feature type="repeat" description="3; approximate">
    <location>
        <begin position="47"/>
        <end position="54"/>
    </location>
</feature>
<feature type="repeat" description="4">
    <location>
        <begin position="58"/>
        <end position="65"/>
    </location>
</feature>
<feature type="repeat" description="5; approximate">
    <location>
        <begin position="66"/>
        <end position="73"/>
    </location>
</feature>
<feature type="repeat" description="6">
    <location>
        <begin position="77"/>
        <end position="84"/>
    </location>
</feature>
<feature type="repeat" description="7">
    <location>
        <begin position="85"/>
        <end position="92"/>
    </location>
</feature>
<feature type="repeat" description="8; approximate">
    <location>
        <begin position="93"/>
        <end position="100"/>
    </location>
</feature>
<feature type="repeat" description="9">
    <location>
        <begin position="104"/>
        <end position="111"/>
    </location>
</feature>
<feature type="repeat" description="10">
    <location>
        <begin position="112"/>
        <end position="119"/>
    </location>
</feature>
<feature type="repeat" description="11">
    <location>
        <begin position="123"/>
        <end position="130"/>
    </location>
</feature>
<feature type="repeat" description="12">
    <location>
        <begin position="131"/>
        <end position="138"/>
    </location>
</feature>
<feature type="repeat" description="13">
    <location>
        <begin position="139"/>
        <end position="146"/>
    </location>
</feature>
<feature type="repeat" description="14">
    <location>
        <begin position="147"/>
        <end position="154"/>
    </location>
</feature>
<feature type="repeat" description="15; approximate">
    <location>
        <begin position="158"/>
        <end position="165"/>
    </location>
</feature>
<feature type="repeat" description="16">
    <location>
        <begin position="166"/>
        <end position="173"/>
    </location>
</feature>
<feature type="repeat" description="17">
    <location>
        <begin position="174"/>
        <end position="181"/>
    </location>
</feature>
<feature type="repeat" description="18; approximate">
    <location>
        <begin position="185"/>
        <end position="192"/>
    </location>
</feature>
<feature type="repeat" description="19">
    <location>
        <begin position="193"/>
        <end position="200"/>
    </location>
</feature>
<feature type="repeat" description="20; approximate">
    <location>
        <begin position="205"/>
        <end position="212"/>
    </location>
</feature>
<feature type="region of interest" description="Disordered" evidence="1">
    <location>
        <begin position="1"/>
        <end position="212"/>
    </location>
</feature>
<feature type="region of interest" description="20 X 8 AA approximate tandem repeats of D-S-Y-G-S-S-N-[DT]">
    <location>
        <begin position="20"/>
        <end position="212"/>
    </location>
</feature>
<feature type="compositionally biased region" description="Basic and acidic residues" evidence="1">
    <location>
        <begin position="1"/>
        <end position="20"/>
    </location>
</feature>
<feature type="compositionally biased region" description="Low complexity" evidence="1">
    <location>
        <begin position="32"/>
        <end position="53"/>
    </location>
</feature>
<feature type="compositionally biased region" description="Polar residues" evidence="1">
    <location>
        <begin position="58"/>
        <end position="69"/>
    </location>
</feature>
<feature type="compositionally biased region" description="Low complexity" evidence="1">
    <location>
        <begin position="78"/>
        <end position="119"/>
    </location>
</feature>
<feature type="compositionally biased region" description="Polar residues" evidence="1">
    <location>
        <begin position="124"/>
        <end position="154"/>
    </location>
</feature>
<feature type="compositionally biased region" description="Low complexity" evidence="1">
    <location>
        <begin position="158"/>
        <end position="201"/>
    </location>
</feature>
<evidence type="ECO:0000256" key="1">
    <source>
        <dbReference type="SAM" id="MobiDB-lite"/>
    </source>
</evidence>
<evidence type="ECO:0000269" key="2">
    <source>
    </source>
</evidence>
<evidence type="ECO:0000269" key="3">
    <source>
    </source>
</evidence>
<evidence type="ECO:0000269" key="4">
    <source>
    </source>
</evidence>
<evidence type="ECO:0000269" key="5">
    <source>
    </source>
</evidence>
<evidence type="ECO:0000269" key="6">
    <source>
    </source>
</evidence>
<evidence type="ECO:0000269" key="7">
    <source>
    </source>
</evidence>
<evidence type="ECO:0000269" key="8">
    <source>
    </source>
</evidence>
<evidence type="ECO:0000269" key="9">
    <source>
    </source>
</evidence>
<evidence type="ECO:0000269" key="10">
    <source>
    </source>
</evidence>
<evidence type="ECO:0000269" key="11">
    <source>
    </source>
</evidence>
<evidence type="ECO:0000269" key="12">
    <source>
    </source>
</evidence>
<evidence type="ECO:0000269" key="13">
    <source>
    </source>
</evidence>
<evidence type="ECO:0000305" key="14"/>
<organism>
    <name type="scientific">Candida albicans (strain SC5314 / ATCC MYA-2876)</name>
    <name type="common">Yeast</name>
    <dbReference type="NCBI Taxonomy" id="237561"/>
    <lineage>
        <taxon>Eukaryota</taxon>
        <taxon>Fungi</taxon>
        <taxon>Dikarya</taxon>
        <taxon>Ascomycota</taxon>
        <taxon>Saccharomycotina</taxon>
        <taxon>Pichiomycetes</taxon>
        <taxon>Debaryomycetaceae</taxon>
        <taxon>Candida/Lodderomyces clade</taxon>
        <taxon>Candida</taxon>
    </lineage>
</organism>
<protein>
    <recommendedName>
        <fullName>Stress protein DDR48</fullName>
    </recommendedName>
    <alternativeName>
        <fullName>DNA damage-responsive protein 48</fullName>
        <shortName>DDRP 48</shortName>
    </alternativeName>
</protein>
<gene>
    <name type="primary">DDR48</name>
    <name type="synonym">DDR99</name>
    <name type="ordered locus">CAALFM_C209220WA</name>
    <name type="ORF">CaO19.11563</name>
    <name type="ORF">CaO19.4082</name>
</gene>
<accession>Q59X49</accession>
<accession>A0A1D8PID1</accession>
<keyword id="KW-0134">Cell wall</keyword>
<keyword id="KW-1185">Reference proteome</keyword>
<keyword id="KW-0677">Repeat</keyword>
<keyword id="KW-0964">Secreted</keyword>
<keyword id="KW-0346">Stress response</keyword>
<comment type="function">
    <text evidence="7 13">Cell surface protein involved in the ability to sense and respond to changes in the host environment. Required for stress response and confers partial antifungal drug resistance. Contributes to the DNA damage response. Required for the flocculation response stimulated by 3-aminotriazole-induced amino acid starvation.</text>
</comment>
<comment type="subcellular location">
    <subcellularLocation>
        <location evidence="10">Secreted</location>
        <location evidence="10">Cell wall</location>
    </subcellularLocation>
</comment>
<comment type="induction">
    <text evidence="2 3 4 5 6 8 9 11 12">Expression is induced during filamentation, biofilm formation, after UV exposure, as well as by benomyl, caspofungin, and ketoconazole. Also enriched in azole-resistant strains and in stationary phase. Expression is repressed by SKO1, HOG1, RFX2, farnesol, and in alkaline conditions. Expression is also controlled by the filamentous growth regulators CPH1, CPH2, and EFG1.</text>
</comment>
<comment type="disruption phenotype">
    <text evidence="13">leads to reduced flocculation stimulated by 3-aminotriazole-induced amino acid starvation.</text>
</comment>
<comment type="similarity">
    <text evidence="14">Belongs to the DDR48 family.</text>
</comment>
<sequence>MVFGFGKDDDKDKNDRRDNDSYGSSNRRNNDDSYGSSSFGSSNDDDNSYGSSNKRSNDSYGSSNTDSYGSSNRRDNDSYGSSNNDSYGSSKTDSYGSSNRSGNDSYGSSNNDSYGSSNRKGNDSYGSSNTDSYGSSNTDSYGSSNTDSYGSSNKRGNDSYGSSNDDSYGSSNDDSYGSSNRRGNDSYGSSNDDSYGSSNRRGNSDSYGSSDY</sequence>
<dbReference type="EMBL" id="CP017624">
    <property type="protein sequence ID" value="AOW27905.1"/>
    <property type="molecule type" value="Genomic_DNA"/>
</dbReference>
<dbReference type="RefSeq" id="XP_714253.1">
    <property type="nucleotide sequence ID" value="XM_709160.2"/>
</dbReference>
<dbReference type="STRING" id="237561.Q59X49"/>
<dbReference type="EnsemblFungi" id="C2_09220W_A-T">
    <property type="protein sequence ID" value="C2_09220W_A-T-p1"/>
    <property type="gene ID" value="C2_09220W_A"/>
</dbReference>
<dbReference type="GeneID" id="3644061"/>
<dbReference type="KEGG" id="cal:CAALFM_C209220WA"/>
<dbReference type="CGD" id="CAL0000176590">
    <property type="gene designation" value="DDR48"/>
</dbReference>
<dbReference type="VEuPathDB" id="FungiDB:C2_09220W_A"/>
<dbReference type="eggNOG" id="ENOG502S5W1">
    <property type="taxonomic scope" value="Eukaryota"/>
</dbReference>
<dbReference type="HOGENOM" id="CLU_114213_0_0_1"/>
<dbReference type="InParanoid" id="Q59X49"/>
<dbReference type="OMA" id="DSMVDQK"/>
<dbReference type="OrthoDB" id="4026468at2759"/>
<dbReference type="PRO" id="PR:Q59X49"/>
<dbReference type="Proteomes" id="UP000000559">
    <property type="component" value="Chromosome 2"/>
</dbReference>
<dbReference type="GO" id="GO:0009986">
    <property type="term" value="C:cell surface"/>
    <property type="evidence" value="ECO:0000314"/>
    <property type="project" value="CGD"/>
</dbReference>
<dbReference type="GO" id="GO:0005576">
    <property type="term" value="C:extracellular region"/>
    <property type="evidence" value="ECO:0007669"/>
    <property type="project" value="UniProtKB-KW"/>
</dbReference>
<dbReference type="GO" id="GO:0030446">
    <property type="term" value="C:hyphal cell wall"/>
    <property type="evidence" value="ECO:0000314"/>
    <property type="project" value="CGD"/>
</dbReference>
<dbReference type="GO" id="GO:0034599">
    <property type="term" value="P:cellular response to oxidative stress"/>
    <property type="evidence" value="ECO:0000315"/>
    <property type="project" value="CGD"/>
</dbReference>
<dbReference type="GO" id="GO:0009267">
    <property type="term" value="P:cellular response to starvation"/>
    <property type="evidence" value="ECO:0000315"/>
    <property type="project" value="CGD"/>
</dbReference>
<dbReference type="GO" id="GO:0033554">
    <property type="term" value="P:cellular response to stress"/>
    <property type="evidence" value="ECO:0000303"/>
    <property type="project" value="CGD"/>
</dbReference>
<dbReference type="GO" id="GO:0030447">
    <property type="term" value="P:filamentous growth"/>
    <property type="evidence" value="ECO:0000315"/>
    <property type="project" value="CGD"/>
</dbReference>
<dbReference type="GO" id="GO:0036180">
    <property type="term" value="P:filamentous growth of a population of unicellular organisms in response to biotic stimulus"/>
    <property type="evidence" value="ECO:0000315"/>
    <property type="project" value="CGD"/>
</dbReference>
<dbReference type="GO" id="GO:0036170">
    <property type="term" value="P:filamentous growth of a population of unicellular organisms in response to starvation"/>
    <property type="evidence" value="ECO:0000315"/>
    <property type="project" value="CGD"/>
</dbReference>
<name>DDR48_CANAL</name>
<proteinExistence type="evidence at protein level"/>